<proteinExistence type="inferred from homology"/>
<gene>
    <name type="primary">NST1</name>
    <name type="ordered locus">DEHA2C08206g</name>
</gene>
<reference key="1">
    <citation type="journal article" date="2004" name="Nature">
        <title>Genome evolution in yeasts.</title>
        <authorList>
            <person name="Dujon B."/>
            <person name="Sherman D."/>
            <person name="Fischer G."/>
            <person name="Durrens P."/>
            <person name="Casaregola S."/>
            <person name="Lafontaine I."/>
            <person name="de Montigny J."/>
            <person name="Marck C."/>
            <person name="Neuveglise C."/>
            <person name="Talla E."/>
            <person name="Goffard N."/>
            <person name="Frangeul L."/>
            <person name="Aigle M."/>
            <person name="Anthouard V."/>
            <person name="Babour A."/>
            <person name="Barbe V."/>
            <person name="Barnay S."/>
            <person name="Blanchin S."/>
            <person name="Beckerich J.-M."/>
            <person name="Beyne E."/>
            <person name="Bleykasten C."/>
            <person name="Boisrame A."/>
            <person name="Boyer J."/>
            <person name="Cattolico L."/>
            <person name="Confanioleri F."/>
            <person name="de Daruvar A."/>
            <person name="Despons L."/>
            <person name="Fabre E."/>
            <person name="Fairhead C."/>
            <person name="Ferry-Dumazet H."/>
            <person name="Groppi A."/>
            <person name="Hantraye F."/>
            <person name="Hennequin C."/>
            <person name="Jauniaux N."/>
            <person name="Joyet P."/>
            <person name="Kachouri R."/>
            <person name="Kerrest A."/>
            <person name="Koszul R."/>
            <person name="Lemaire M."/>
            <person name="Lesur I."/>
            <person name="Ma L."/>
            <person name="Muller H."/>
            <person name="Nicaud J.-M."/>
            <person name="Nikolski M."/>
            <person name="Oztas S."/>
            <person name="Ozier-Kalogeropoulos O."/>
            <person name="Pellenz S."/>
            <person name="Potier S."/>
            <person name="Richard G.-F."/>
            <person name="Straub M.-L."/>
            <person name="Suleau A."/>
            <person name="Swennen D."/>
            <person name="Tekaia F."/>
            <person name="Wesolowski-Louvel M."/>
            <person name="Westhof E."/>
            <person name="Wirth B."/>
            <person name="Zeniou-Meyer M."/>
            <person name="Zivanovic Y."/>
            <person name="Bolotin-Fukuhara M."/>
            <person name="Thierry A."/>
            <person name="Bouchier C."/>
            <person name="Caudron B."/>
            <person name="Scarpelli C."/>
            <person name="Gaillardin C."/>
            <person name="Weissenbach J."/>
            <person name="Wincker P."/>
            <person name="Souciet J.-L."/>
        </authorList>
    </citation>
    <scope>NUCLEOTIDE SEQUENCE [LARGE SCALE GENOMIC DNA]</scope>
    <source>
        <strain>ATCC 36239 / CBS 767 / BCRC 21394 / JCM 1990 / NBRC 0083 / IGC 2968</strain>
    </source>
</reference>
<dbReference type="EMBL" id="CR382135">
    <property type="protein sequence ID" value="CAR65551.1"/>
    <property type="molecule type" value="Genomic_DNA"/>
</dbReference>
<dbReference type="RefSeq" id="XP_002770186.1">
    <property type="nucleotide sequence ID" value="XM_002770140.1"/>
</dbReference>
<dbReference type="SMR" id="Q6BUT3"/>
<dbReference type="GeneID" id="8998337"/>
<dbReference type="KEGG" id="dha:DEHA2C08206g"/>
<dbReference type="eggNOG" id="ENOG502QSSK">
    <property type="taxonomic scope" value="Eukaryota"/>
</dbReference>
<dbReference type="HOGENOM" id="CLU_003284_0_0_1"/>
<dbReference type="InParanoid" id="Q6BUT3"/>
<dbReference type="OMA" id="SCACKYC"/>
<dbReference type="OrthoDB" id="21629at2759"/>
<dbReference type="Proteomes" id="UP000000599">
    <property type="component" value="Chromosome C"/>
</dbReference>
<dbReference type="GO" id="GO:0005737">
    <property type="term" value="C:cytoplasm"/>
    <property type="evidence" value="ECO:0007669"/>
    <property type="project" value="UniProtKB-SubCell"/>
</dbReference>
<dbReference type="InterPro" id="IPR051195">
    <property type="entry name" value="Fungal_stress_NST1"/>
</dbReference>
<dbReference type="InterPro" id="IPR025279">
    <property type="entry name" value="NST1"/>
</dbReference>
<dbReference type="PANTHER" id="PTHR31780:SF10">
    <property type="entry name" value="LD36051P"/>
    <property type="match status" value="1"/>
</dbReference>
<dbReference type="PANTHER" id="PTHR31780">
    <property type="entry name" value="STRESS RESPONSE PROTEIN NST1-RELATED"/>
    <property type="match status" value="1"/>
</dbReference>
<dbReference type="Pfam" id="PF13945">
    <property type="entry name" value="NST1"/>
    <property type="match status" value="2"/>
</dbReference>
<protein>
    <recommendedName>
        <fullName>Stress response protein NST1</fullName>
    </recommendedName>
</protein>
<evidence type="ECO:0000250" key="1"/>
<evidence type="ECO:0000255" key="2"/>
<evidence type="ECO:0000256" key="3">
    <source>
        <dbReference type="SAM" id="MobiDB-lite"/>
    </source>
</evidence>
<evidence type="ECO:0000305" key="4"/>
<comment type="function">
    <text evidence="1">May act as a negative regulator of salt tolerance.</text>
</comment>
<comment type="subcellular location">
    <subcellularLocation>
        <location evidence="1">Cytoplasm</location>
    </subcellularLocation>
</comment>
<comment type="similarity">
    <text evidence="4">Belongs to the NST1 family.</text>
</comment>
<accession>Q6BUT3</accession>
<accession>B5RT89</accession>
<organism>
    <name type="scientific">Debaryomyces hansenii (strain ATCC 36239 / CBS 767 / BCRC 21394 / JCM 1990 / NBRC 0083 / IGC 2968)</name>
    <name type="common">Yeast</name>
    <name type="synonym">Torulaspora hansenii</name>
    <dbReference type="NCBI Taxonomy" id="284592"/>
    <lineage>
        <taxon>Eukaryota</taxon>
        <taxon>Fungi</taxon>
        <taxon>Dikarya</taxon>
        <taxon>Ascomycota</taxon>
        <taxon>Saccharomycotina</taxon>
        <taxon>Pichiomycetes</taxon>
        <taxon>Debaryomycetaceae</taxon>
        <taxon>Debaryomyces</taxon>
    </lineage>
</organism>
<keyword id="KW-0175">Coiled coil</keyword>
<keyword id="KW-0963">Cytoplasm</keyword>
<keyword id="KW-1185">Reference proteome</keyword>
<keyword id="KW-0346">Stress response</keyword>
<name>NST1_DEBHA</name>
<sequence length="1179" mass="133686">MSETQSDPIDVSKFKNGDDVHFDYNSTTNDQTINSTNVQKKKKKKKSKNKHKGSPNVEATLNDPDVEYPTSRVIKQAPNGDVIIESLDEPSDAHTKSVTANIWDNATLEEQENLKAFWESLDEAQKIELVKIDKKSIMDIFKNESKTVNTSNNHQNNSNTQGGSTSTSGGALNGSSTNVNIPGAPSNSSNGACTCSYCGRKNNFIEDELENIYDNHFDDIIDFIHEVRDINDLNALPGLLFGGFHMLEEEHKLQKRQQKYKYKQERDAHHDHHNHEPGHICSDTGSSGDYDGSTQQDQQHQYEHEIEHAFQEDEHEDECGHKNDHSHSHSHSHTENHNHSHSYDPNHNHSHSHFQYDQIEELNNEDELSQEAVLQKSLDDELNKELGDESNNNQSSIATKEQRVFHKLLDPKLFEALENLDFEKMKDTPANNHSAHILEKAGSLRDIIRDLHKADKVELEKGMAFLQNMGKIFSSDMSNAMNHDTLNDQISNGLSSFAEDLLKNDGNSFIDMMESLSESRTAREDLLKEKFDKEPSAAWIDEDDHTKSDTDISIPKPDLHQVQELEEELNDEYDEVDEDDDEGEEEGEEEEEELDDEEFEEDEEEDASDTESEISEEEKMQEIRRLFLIQVIKLFQERLKNAYKEKLSQDRTRTLIEELEAEENAKKEREMKKLRQKEKAKEKKRLQQLAKEEERRKKEEEQKAKEEELKQKQEALRAEQRRKKEEAKQKREEEKRKRIEELKRKELEHQKRLEAQRKKEEETKKLKDEKKKKIEEERKQKEEEKRQKELQKKLVEEERSKSAKKQDHKETGSSEDISQLSRDLENARLGQNFNIPSPVVPDTLLAQPQEPRVKSPTKNHILDQLYLAKPRSLSNSTNSTPQINNVTPGYIPDLSSNSMLPSVLSPSGHNILPNNGNVNNQAVPSPWSSQAFNANTQAPPVYQPQLSSNAFSPFNSSLSQNSLSSNANENLNTNPLNTTGFNEPFATAAQPSSVWNPGATSRNNSIWSNSPNVASNSTLWGNSVPAPPVGAAVGGNPNSLDSDLIQAAAYQAFQFLQNSNQLEFGVAPSLKLFQTAKTILSNQGLTLNQFLTSCRNTGSLSGYGFDFIYDDFGTVTHIKASSTNIPQQPPHNNVNTQSINSLGLGNAAVNDNESSLLNTLSDINNNPNSFSNGVRGLWN</sequence>
<feature type="chain" id="PRO_0000324449" description="Stress response protein NST1">
    <location>
        <begin position="1"/>
        <end position="1179"/>
    </location>
</feature>
<feature type="region of interest" description="Disordered" evidence="3">
    <location>
        <begin position="1"/>
        <end position="64"/>
    </location>
</feature>
<feature type="region of interest" description="Disordered" evidence="3">
    <location>
        <begin position="147"/>
        <end position="189"/>
    </location>
</feature>
<feature type="region of interest" description="Disordered" evidence="3">
    <location>
        <begin position="255"/>
        <end position="351"/>
    </location>
</feature>
<feature type="region of interest" description="Disordered" evidence="3">
    <location>
        <begin position="537"/>
        <end position="619"/>
    </location>
</feature>
<feature type="region of interest" description="Disordered" evidence="3">
    <location>
        <begin position="660"/>
        <end position="819"/>
    </location>
</feature>
<feature type="region of interest" description="Disordered" evidence="3">
    <location>
        <begin position="928"/>
        <end position="947"/>
    </location>
</feature>
<feature type="region of interest" description="Disordered" evidence="3">
    <location>
        <begin position="957"/>
        <end position="997"/>
    </location>
</feature>
<feature type="coiled-coil region" evidence="2">
    <location>
        <begin position="648"/>
        <end position="810"/>
    </location>
</feature>
<feature type="compositionally biased region" description="Basic and acidic residues" evidence="3">
    <location>
        <begin position="10"/>
        <end position="22"/>
    </location>
</feature>
<feature type="compositionally biased region" description="Polar residues" evidence="3">
    <location>
        <begin position="24"/>
        <end position="38"/>
    </location>
</feature>
<feature type="compositionally biased region" description="Basic residues" evidence="3">
    <location>
        <begin position="39"/>
        <end position="53"/>
    </location>
</feature>
<feature type="compositionally biased region" description="Low complexity" evidence="3">
    <location>
        <begin position="149"/>
        <end position="178"/>
    </location>
</feature>
<feature type="compositionally biased region" description="Basic and acidic residues" evidence="3">
    <location>
        <begin position="262"/>
        <end position="278"/>
    </location>
</feature>
<feature type="compositionally biased region" description="Low complexity" evidence="3">
    <location>
        <begin position="282"/>
        <end position="299"/>
    </location>
</feature>
<feature type="compositionally biased region" description="Basic and acidic residues" evidence="3">
    <location>
        <begin position="300"/>
        <end position="347"/>
    </location>
</feature>
<feature type="compositionally biased region" description="Acidic residues" evidence="3">
    <location>
        <begin position="564"/>
        <end position="616"/>
    </location>
</feature>
<feature type="compositionally biased region" description="Basic and acidic residues" evidence="3">
    <location>
        <begin position="663"/>
        <end position="681"/>
    </location>
</feature>
<feature type="compositionally biased region" description="Basic and acidic residues" evidence="3">
    <location>
        <begin position="690"/>
        <end position="812"/>
    </location>
</feature>
<feature type="compositionally biased region" description="Low complexity" evidence="3">
    <location>
        <begin position="957"/>
        <end position="977"/>
    </location>
</feature>